<name>WDR44_BOVIN</name>
<feature type="initiator methionine" description="Removed" evidence="1">
    <location>
        <position position="1"/>
    </location>
</feature>
<feature type="chain" id="PRO_0000262768" description="WD repeat-containing protein 44">
    <location>
        <begin position="2"/>
        <end position="912"/>
    </location>
</feature>
<feature type="repeat" description="WD 1">
    <location>
        <begin position="508"/>
        <end position="547"/>
    </location>
</feature>
<feature type="repeat" description="WD 2">
    <location>
        <begin position="604"/>
        <end position="642"/>
    </location>
</feature>
<feature type="repeat" description="WD 3">
    <location>
        <begin position="644"/>
        <end position="684"/>
    </location>
</feature>
<feature type="repeat" description="WD 4">
    <location>
        <begin position="689"/>
        <end position="728"/>
    </location>
</feature>
<feature type="repeat" description="WD 5">
    <location>
        <begin position="739"/>
        <end position="778"/>
    </location>
</feature>
<feature type="repeat" description="WD 6">
    <location>
        <begin position="783"/>
        <end position="822"/>
    </location>
</feature>
<feature type="repeat" description="WD 7">
    <location>
        <begin position="871"/>
        <end position="912"/>
    </location>
</feature>
<feature type="region of interest" description="Disordered" evidence="4">
    <location>
        <begin position="1"/>
        <end position="25"/>
    </location>
</feature>
<feature type="region of interest" description="Binding activity">
    <location>
        <begin position="2"/>
        <end position="170"/>
    </location>
</feature>
<feature type="region of interest" description="Disordered" evidence="4">
    <location>
        <begin position="79"/>
        <end position="104"/>
    </location>
</feature>
<feature type="region of interest" description="Disordered" evidence="4">
    <location>
        <begin position="118"/>
        <end position="152"/>
    </location>
</feature>
<feature type="region of interest" description="Disordered" evidence="4">
    <location>
        <begin position="183"/>
        <end position="202"/>
    </location>
</feature>
<feature type="region of interest" description="Disordered" evidence="4">
    <location>
        <begin position="207"/>
        <end position="279"/>
    </location>
</feature>
<feature type="region of interest" description="Important for interaction with ARHGAP26 AND ARHGAP10" evidence="1">
    <location>
        <begin position="210"/>
        <end position="256"/>
    </location>
</feature>
<feature type="region of interest" description="Disordered" evidence="4">
    <location>
        <begin position="318"/>
        <end position="349"/>
    </location>
</feature>
<feature type="region of interest" description="Important for interaction with RAB11A" evidence="1">
    <location>
        <begin position="333"/>
        <end position="346"/>
    </location>
</feature>
<feature type="region of interest" description="Interaction with RAB11" evidence="5">
    <location>
        <begin position="334"/>
        <end position="504"/>
    </location>
</feature>
<feature type="region of interest" description="Disordered" evidence="4">
    <location>
        <begin position="396"/>
        <end position="422"/>
    </location>
</feature>
<feature type="region of interest" description="Disordered" evidence="4">
    <location>
        <begin position="457"/>
        <end position="479"/>
    </location>
</feature>
<feature type="region of interest" description="Disordered" evidence="4">
    <location>
        <begin position="556"/>
        <end position="592"/>
    </location>
</feature>
<feature type="short sequence motif" description="FFAT-like motif" evidence="1">
    <location>
        <begin position="9"/>
        <end position="15"/>
    </location>
</feature>
<feature type="compositionally biased region" description="Acidic residues" evidence="4">
    <location>
        <begin position="1"/>
        <end position="14"/>
    </location>
</feature>
<feature type="compositionally biased region" description="Polar residues" evidence="4">
    <location>
        <begin position="89"/>
        <end position="104"/>
    </location>
</feature>
<feature type="compositionally biased region" description="Pro residues" evidence="4">
    <location>
        <begin position="232"/>
        <end position="255"/>
    </location>
</feature>
<feature type="compositionally biased region" description="Basic and acidic residues" evidence="4">
    <location>
        <begin position="261"/>
        <end position="277"/>
    </location>
</feature>
<feature type="compositionally biased region" description="Acidic residues" evidence="4">
    <location>
        <begin position="466"/>
        <end position="475"/>
    </location>
</feature>
<feature type="compositionally biased region" description="Low complexity" evidence="4">
    <location>
        <begin position="560"/>
        <end position="572"/>
    </location>
</feature>
<feature type="modified residue" description="N-acetylalanine" evidence="1">
    <location>
        <position position="2"/>
    </location>
</feature>
<feature type="modified residue" description="Phosphoserine" evidence="1">
    <location>
        <position position="3"/>
    </location>
</feature>
<feature type="modified residue" description="Phosphoserine" evidence="1">
    <location>
        <position position="50"/>
    </location>
</feature>
<feature type="modified residue" description="Phosphoserine" evidence="1">
    <location>
        <position position="66"/>
    </location>
</feature>
<feature type="modified residue" description="Phosphoserine" evidence="1">
    <location>
        <position position="71"/>
    </location>
</feature>
<feature type="modified residue" description="Phosphoserine" evidence="1">
    <location>
        <position position="81"/>
    </location>
</feature>
<feature type="modified residue" description="Phosphoserine" evidence="1">
    <location>
        <position position="96"/>
    </location>
</feature>
<feature type="modified residue" description="Phosphoserine" evidence="1">
    <location>
        <position position="126"/>
    </location>
</feature>
<feature type="modified residue" description="Phosphothreonine" evidence="1">
    <location>
        <position position="158"/>
    </location>
</feature>
<feature type="modified residue" description="Phosphothreonine" evidence="1">
    <location>
        <position position="218"/>
    </location>
</feature>
<feature type="modified residue" description="Phosphoserine" evidence="1">
    <location>
        <position position="261"/>
    </location>
</feature>
<feature type="modified residue" description="Phosphothreonine" evidence="1">
    <location>
        <position position="270"/>
    </location>
</feature>
<feature type="modified residue" description="Phosphoserine" evidence="1">
    <location>
        <position position="341"/>
    </location>
</feature>
<feature type="modified residue" description="Phosphoserine" evidence="1">
    <location>
        <position position="343"/>
    </location>
</feature>
<feature type="modified residue" description="Phosphothreonine" evidence="1">
    <location>
        <position position="348"/>
    </location>
</feature>
<feature type="modified residue" description="Phosphoserine" evidence="1">
    <location>
        <position position="402"/>
    </location>
</feature>
<feature type="modified residue" description="Phosphoserine" evidence="1">
    <location>
        <position position="469"/>
    </location>
</feature>
<feature type="modified residue" description="Phosphoserine" evidence="1">
    <location>
        <position position="470"/>
    </location>
</feature>
<feature type="modified residue" description="Phosphoserine" evidence="1">
    <location>
        <position position="471"/>
    </location>
</feature>
<feature type="modified residue" description="Phosphotyrosine" evidence="2">
    <location>
        <position position="478"/>
    </location>
</feature>
<feature type="modified residue" description="Phosphoserine" evidence="1">
    <location>
        <position position="560"/>
    </location>
</feature>
<feature type="modified residue" description="Phosphoserine" evidence="1">
    <location>
        <position position="564"/>
    </location>
</feature>
<keyword id="KW-0007">Acetylation</keyword>
<keyword id="KW-0963">Cytoplasm</keyword>
<keyword id="KW-0903">Direct protein sequencing</keyword>
<keyword id="KW-0967">Endosome</keyword>
<keyword id="KW-0333">Golgi apparatus</keyword>
<keyword id="KW-0472">Membrane</keyword>
<keyword id="KW-0597">Phosphoprotein</keyword>
<keyword id="KW-1185">Reference proteome</keyword>
<keyword id="KW-0677">Repeat</keyword>
<keyword id="KW-0853">WD repeat</keyword>
<organism>
    <name type="scientific">Bos taurus</name>
    <name type="common">Bovine</name>
    <dbReference type="NCBI Taxonomy" id="9913"/>
    <lineage>
        <taxon>Eukaryota</taxon>
        <taxon>Metazoa</taxon>
        <taxon>Chordata</taxon>
        <taxon>Craniata</taxon>
        <taxon>Vertebrata</taxon>
        <taxon>Euteleostomi</taxon>
        <taxon>Mammalia</taxon>
        <taxon>Eutheria</taxon>
        <taxon>Laurasiatheria</taxon>
        <taxon>Artiodactyla</taxon>
        <taxon>Ruminantia</taxon>
        <taxon>Pecora</taxon>
        <taxon>Bovidae</taxon>
        <taxon>Bovinae</taxon>
        <taxon>Bos</taxon>
    </lineage>
</organism>
<comment type="function">
    <text evidence="1 5">Downstream effector for Rab11 which regulates Rab11 intracellular membrane trafficking functions such as endocytic recycling, intracellular ciliogenesis and protein export (PubMed:10077598). ATK1-mediated phosphorylation of WDR44 induces binding to Rab11 which activates endocytic recycling of transferrin receptor back to the plasma membrane (PubMed:10077598). When bound to Rab11, prevents the formation of the ciliogenic Rab11-Rabin8/RAB3IP-RAB11FIP3 complex, therefore inhibiting preciliary trafficking and ciliogenesis (By similarity). Participates in neo-synthesized protein export by connecting the endoplasmic reticulum (ER) with the endosomal tubule via direct interactions with the integral ER proteins VAPA or VAPB and the endosomal protein GRAFs (GRAF1/ARHGAP26 or GRAF2/ARHGAP10), which facilitates the transfer of proteins such as E-cadherin, MPP14 and CFTR into a Rab8-Rab10-Rab11-dependent export route (By similarity).</text>
</comment>
<comment type="subunit">
    <text evidence="1 5">Interacts with the GTP-bound form of RAB11A when membrane-associated (PubMed:10077598). Interacts with GRAF1/ARHGAP26 or GRAF2/ARHGAP10; the interaction connects the endoplasmic reticulum (ER) with the endosomal tubule (By similarity). Interacts (via FFAT-like motif) with VAPA (via MSP domain) or VAPB (via MSP domain); the interaction connects the ER with the endosomal tubule (By similarity). Does not bind to other Rab and Rho small G proteins (PubMed:10077598).</text>
</comment>
<comment type="subcellular location">
    <subcellularLocation>
        <location evidence="5">Cytoplasm</location>
        <location evidence="5">Cytosol</location>
    </subcellularLocation>
    <subcellularLocation>
        <location evidence="5">Cytoplasm</location>
        <location evidence="5">Perinuclear region</location>
    </subcellularLocation>
    <subcellularLocation>
        <location evidence="5">Endosome membrane</location>
    </subcellularLocation>
    <subcellularLocation>
        <location evidence="5">Golgi apparatus</location>
        <location evidence="5">trans-Golgi network</location>
    </subcellularLocation>
    <text evidence="3">Colocalized with RAB11 along microtubules oriented toward lamellipodia.</text>
</comment>
<comment type="tissue specificity">
    <text evidence="5">Highly expressed in brain.</text>
</comment>
<comment type="domain">
    <text evidence="1">The FFAT-like motif is important for interaction with VAPA or VAPB.</text>
</comment>
<comment type="PTM">
    <text evidence="1">Phosphorylated by ATK1; the phosphorylation stabilizes its interaction with RAB11A and RAB11B.</text>
</comment>
<accession>Q9XSC3</accession>
<sequence length="912" mass="101293">MASESDTEEFFDAPEDVHLEGGDPIGYPGKVGISALKETENSAYKVGNESTVQELKQDVSKKIIESIIEESQKVIQLEDDSLDSKGKGQSDQATASPVTAGTELSNIPGLLAIDQVLQEDSQKAESQDVSEETELESKQCFPSDDTCEKPVDETTKLTEISSTAQLNVPETVTEVLNKEEVEVKESDVLESASSHSLSTKDFAVVEEVAPAKPPRQLTPEPDIVASTKKPVPARPPPPANFPPPRPPPPSRPAPPPRKKKSELEFEALKTPDLDVPKENITSDTLLTTNMASESTVKDSQPSLDLASATSGDKIVTAQENGKAPDGQTIAGEVMGPQRPRSNSGRELTDEEILASVMIKNLDTGEEIPLSLAEEKLPTGINPLTLHIMRRTKEYVSNDAAQSDDEEKLQSQQTDTDGGRLKQKTTQLKKFLGKSVKRAKHLAEEYGERAVNKVKSVRDEVFHTDQDDPSSSDDEGMPYTRPVKFKAAHGFKGPYDFDQIKVVQDLSGEHMGAVWTMKFSHCGRLLASAGQDNVVRIWALKNAFDYFNNMRMKYNTEGRVSPSPSQESLNSSKSDTDTGVCSGTDEDPDDKNAPFRQRPFCKYKGHTADLLDLSWSKNYFLLSSSMDKTVRLWHISRRECLCCFQHIDFVTAIAFHPRDDRYFLSGSLDGKLRLWNIPDKKVALWNEVDGQTKLITAANFCQNGKYAVIGTYDGRCIFYDTEHLKYHTQIHVRSTRGRNKVGRKITGIEPLPGENKILVTSNDSRIRLYDLRDLSLSMKYKGYVNSSSQIKASFSHDFNYLVSGSEDKYVYIWSTYHDLSKFTSVRRDRNDFWEGIKAHNAVVTSAIFAPNPSLMLSLDVQSEKSEGNEKGEDAEVLETMPSGIMKTDNTEVLLSADFTGAIKVFINKRKNLS</sequence>
<reference key="1">
    <citation type="journal article" date="1999" name="Proc. Natl. Acad. Sci. U.S.A.">
        <title>Identification of a putative effector protein for rab11 that participates in transferrin recycling.</title>
        <authorList>
            <person name="Zeng J."/>
            <person name="Ren M."/>
            <person name="Gravotta D."/>
            <person name="De Lemos-Chiarandini C."/>
            <person name="Tempst P."/>
            <person name="Erdjument-Bromage H."/>
            <person name="Liu M."/>
            <person name="Xu G."/>
            <person name="Shen T."/>
            <person name="Morimoto T."/>
            <person name="Adesnik M."/>
            <person name="Sabatini D.D."/>
        </authorList>
    </citation>
    <scope>NUCLEOTIDE SEQUENCE [MRNA]</scope>
    <scope>PROTEIN SEQUENCE OF 88-117; 217-228; 376-389; 536-540; 541-550; 695-704; 791-811 AND 837-860</scope>
    <scope>FUNCTION</scope>
    <scope>SUBCELLULAR LOCATION</scope>
    <scope>TISSUE SPECIFICITY</scope>
    <scope>INTERACTION WITH RAB11</scope>
</reference>
<gene>
    <name type="primary">WDR44</name>
    <name evidence="6" type="synonym">RAB11BP</name>
    <name type="synonym">RPH11</name>
</gene>
<evidence type="ECO:0000250" key="1">
    <source>
        <dbReference type="UniProtKB" id="Q5JSH3"/>
    </source>
</evidence>
<evidence type="ECO:0000250" key="2">
    <source>
        <dbReference type="UniProtKB" id="Q6NVE8"/>
    </source>
</evidence>
<evidence type="ECO:0000250" key="3">
    <source>
        <dbReference type="UniProtKB" id="Q9R037"/>
    </source>
</evidence>
<evidence type="ECO:0000256" key="4">
    <source>
        <dbReference type="SAM" id="MobiDB-lite"/>
    </source>
</evidence>
<evidence type="ECO:0000269" key="5">
    <source>
    </source>
</evidence>
<evidence type="ECO:0000303" key="6">
    <source>
    </source>
</evidence>
<dbReference type="EMBL" id="AF117897">
    <property type="protein sequence ID" value="AAD21616.1"/>
    <property type="molecule type" value="mRNA"/>
</dbReference>
<dbReference type="RefSeq" id="NP_777199.1">
    <property type="nucleotide sequence ID" value="NM_174774.2"/>
</dbReference>
<dbReference type="SMR" id="Q9XSC3"/>
<dbReference type="FunCoup" id="Q9XSC3">
    <property type="interactions" value="2577"/>
</dbReference>
<dbReference type="STRING" id="9913.ENSBTAP00000024883"/>
<dbReference type="PaxDb" id="9913-ENSBTAP00000024883"/>
<dbReference type="Ensembl" id="ENSBTAT00000024883.6">
    <property type="protein sequence ID" value="ENSBTAP00000024883.6"/>
    <property type="gene ID" value="ENSBTAG00000018697.7"/>
</dbReference>
<dbReference type="GeneID" id="286825"/>
<dbReference type="KEGG" id="bta:286825"/>
<dbReference type="CTD" id="54521"/>
<dbReference type="VEuPathDB" id="HostDB:ENSBTAG00000018697"/>
<dbReference type="VGNC" id="VGNC:36900">
    <property type="gene designation" value="WDR44"/>
</dbReference>
<dbReference type="eggNOG" id="KOG0283">
    <property type="taxonomic scope" value="Eukaryota"/>
</dbReference>
<dbReference type="GeneTree" id="ENSGT00940000157557"/>
<dbReference type="InParanoid" id="Q9XSC3"/>
<dbReference type="OMA" id="SQECVRP"/>
<dbReference type="OrthoDB" id="1932312at2759"/>
<dbReference type="Proteomes" id="UP000009136">
    <property type="component" value="Chromosome X"/>
</dbReference>
<dbReference type="Bgee" id="ENSBTAG00000018697">
    <property type="expression patterns" value="Expressed in neutrophil and 104 other cell types or tissues"/>
</dbReference>
<dbReference type="GO" id="GO:0005829">
    <property type="term" value="C:cytosol"/>
    <property type="evidence" value="ECO:0007669"/>
    <property type="project" value="UniProtKB-SubCell"/>
</dbReference>
<dbReference type="GO" id="GO:0010008">
    <property type="term" value="C:endosome membrane"/>
    <property type="evidence" value="ECO:0007669"/>
    <property type="project" value="UniProtKB-SubCell"/>
</dbReference>
<dbReference type="GO" id="GO:0005794">
    <property type="term" value="C:Golgi apparatus"/>
    <property type="evidence" value="ECO:0007669"/>
    <property type="project" value="UniProtKB-SubCell"/>
</dbReference>
<dbReference type="GO" id="GO:0048471">
    <property type="term" value="C:perinuclear region of cytoplasm"/>
    <property type="evidence" value="ECO:0007669"/>
    <property type="project" value="UniProtKB-SubCell"/>
</dbReference>
<dbReference type="GO" id="GO:0140313">
    <property type="term" value="F:molecular sequestering activity"/>
    <property type="evidence" value="ECO:0000250"/>
    <property type="project" value="UniProtKB"/>
</dbReference>
<dbReference type="GO" id="GO:0031267">
    <property type="term" value="F:small GTPase binding"/>
    <property type="evidence" value="ECO:0000250"/>
    <property type="project" value="UniProtKB"/>
</dbReference>
<dbReference type="GO" id="GO:0061824">
    <property type="term" value="P:cytosolic ciliogenesis"/>
    <property type="evidence" value="ECO:0000250"/>
    <property type="project" value="UniProtKB"/>
</dbReference>
<dbReference type="GO" id="GO:1902018">
    <property type="term" value="P:negative regulation of cilium assembly"/>
    <property type="evidence" value="ECO:0000250"/>
    <property type="project" value="UniProtKB"/>
</dbReference>
<dbReference type="GO" id="GO:0060627">
    <property type="term" value="P:regulation of vesicle-mediated transport"/>
    <property type="evidence" value="ECO:0000250"/>
    <property type="project" value="UniProtKB"/>
</dbReference>
<dbReference type="CDD" id="cd00200">
    <property type="entry name" value="WD40"/>
    <property type="match status" value="1"/>
</dbReference>
<dbReference type="Gene3D" id="2.130.10.10">
    <property type="entry name" value="YVTN repeat-like/Quinoprotein amine dehydrogenase"/>
    <property type="match status" value="1"/>
</dbReference>
<dbReference type="InterPro" id="IPR020472">
    <property type="entry name" value="G-protein_beta_WD-40_rep"/>
</dbReference>
<dbReference type="InterPro" id="IPR015943">
    <property type="entry name" value="WD40/YVTN_repeat-like_dom_sf"/>
</dbReference>
<dbReference type="InterPro" id="IPR036322">
    <property type="entry name" value="WD40_repeat_dom_sf"/>
</dbReference>
<dbReference type="InterPro" id="IPR001680">
    <property type="entry name" value="WD40_rpt"/>
</dbReference>
<dbReference type="InterPro" id="IPR040324">
    <property type="entry name" value="WDR44/Dgr2"/>
</dbReference>
<dbReference type="PANTHER" id="PTHR14221">
    <property type="entry name" value="WD REPEAT DOMAIN 44"/>
    <property type="match status" value="1"/>
</dbReference>
<dbReference type="PANTHER" id="PTHR14221:SF0">
    <property type="entry name" value="WD REPEAT-CONTAINING PROTEIN 44"/>
    <property type="match status" value="1"/>
</dbReference>
<dbReference type="Pfam" id="PF00400">
    <property type="entry name" value="WD40"/>
    <property type="match status" value="4"/>
</dbReference>
<dbReference type="PRINTS" id="PR00320">
    <property type="entry name" value="GPROTEINBRPT"/>
</dbReference>
<dbReference type="SMART" id="SM00320">
    <property type="entry name" value="WD40"/>
    <property type="match status" value="6"/>
</dbReference>
<dbReference type="SUPFAM" id="SSF50978">
    <property type="entry name" value="WD40 repeat-like"/>
    <property type="match status" value="1"/>
</dbReference>
<dbReference type="PROSITE" id="PS50082">
    <property type="entry name" value="WD_REPEATS_2"/>
    <property type="match status" value="4"/>
</dbReference>
<dbReference type="PROSITE" id="PS50294">
    <property type="entry name" value="WD_REPEATS_REGION"/>
    <property type="match status" value="1"/>
</dbReference>
<proteinExistence type="evidence at protein level"/>
<protein>
    <recommendedName>
        <fullName>WD repeat-containing protein 44</fullName>
    </recommendedName>
    <alternativeName>
        <fullName evidence="6">Rab11-binding protein</fullName>
        <shortName evidence="6">Rab11BP</shortName>
    </alternativeName>
    <alternativeName>
        <fullName evidence="3">Rabphilin-11</fullName>
    </alternativeName>
</protein>